<feature type="chain" id="PRO_0000229325" description="ATP phosphoribosyltransferase">
    <location>
        <begin position="1"/>
        <end position="220"/>
    </location>
</feature>
<keyword id="KW-0028">Amino-acid biosynthesis</keyword>
<keyword id="KW-0067">ATP-binding</keyword>
<keyword id="KW-0963">Cytoplasm</keyword>
<keyword id="KW-0328">Glycosyltransferase</keyword>
<keyword id="KW-0368">Histidine biosynthesis</keyword>
<keyword id="KW-0547">Nucleotide-binding</keyword>
<keyword id="KW-1185">Reference proteome</keyword>
<keyword id="KW-0808">Transferase</keyword>
<accession>Q46GM0</accession>
<name>HIS1_PROMT</name>
<proteinExistence type="inferred from homology"/>
<reference key="1">
    <citation type="journal article" date="2007" name="PLoS Genet.">
        <title>Patterns and implications of gene gain and loss in the evolution of Prochlorococcus.</title>
        <authorList>
            <person name="Kettler G.C."/>
            <person name="Martiny A.C."/>
            <person name="Huang K."/>
            <person name="Zucker J."/>
            <person name="Coleman M.L."/>
            <person name="Rodrigue S."/>
            <person name="Chen F."/>
            <person name="Lapidus A."/>
            <person name="Ferriera S."/>
            <person name="Johnson J."/>
            <person name="Steglich C."/>
            <person name="Church G.M."/>
            <person name="Richardson P."/>
            <person name="Chisholm S.W."/>
        </authorList>
    </citation>
    <scope>NUCLEOTIDE SEQUENCE [LARGE SCALE GENOMIC DNA]</scope>
    <source>
        <strain>NATL2A</strain>
    </source>
</reference>
<evidence type="ECO:0000255" key="1">
    <source>
        <dbReference type="HAMAP-Rule" id="MF_01018"/>
    </source>
</evidence>
<protein>
    <recommendedName>
        <fullName evidence="1">ATP phosphoribosyltransferase</fullName>
        <shortName evidence="1">ATP-PRT</shortName>
        <shortName evidence="1">ATP-PRTase</shortName>
        <ecNumber evidence="1">2.4.2.17</ecNumber>
    </recommendedName>
</protein>
<dbReference type="EC" id="2.4.2.17" evidence="1"/>
<dbReference type="EMBL" id="CP000095">
    <property type="protein sequence ID" value="AAZ59378.1"/>
    <property type="molecule type" value="Genomic_DNA"/>
</dbReference>
<dbReference type="RefSeq" id="WP_011294521.1">
    <property type="nucleotide sequence ID" value="NC_007335.2"/>
</dbReference>
<dbReference type="SMR" id="Q46GM0"/>
<dbReference type="STRING" id="59920.PMN2A_1890"/>
<dbReference type="KEGG" id="pmn:PMN2A_1890"/>
<dbReference type="HOGENOM" id="CLU_038115_2_0_3"/>
<dbReference type="OrthoDB" id="9801867at2"/>
<dbReference type="PhylomeDB" id="Q46GM0"/>
<dbReference type="UniPathway" id="UPA00031">
    <property type="reaction ID" value="UER00006"/>
</dbReference>
<dbReference type="Proteomes" id="UP000002535">
    <property type="component" value="Chromosome"/>
</dbReference>
<dbReference type="GO" id="GO:0005737">
    <property type="term" value="C:cytoplasm"/>
    <property type="evidence" value="ECO:0007669"/>
    <property type="project" value="UniProtKB-SubCell"/>
</dbReference>
<dbReference type="GO" id="GO:0005524">
    <property type="term" value="F:ATP binding"/>
    <property type="evidence" value="ECO:0007669"/>
    <property type="project" value="UniProtKB-KW"/>
</dbReference>
<dbReference type="GO" id="GO:0003879">
    <property type="term" value="F:ATP phosphoribosyltransferase activity"/>
    <property type="evidence" value="ECO:0007669"/>
    <property type="project" value="UniProtKB-UniRule"/>
</dbReference>
<dbReference type="GO" id="GO:0000105">
    <property type="term" value="P:L-histidine biosynthetic process"/>
    <property type="evidence" value="ECO:0007669"/>
    <property type="project" value="UniProtKB-UniRule"/>
</dbReference>
<dbReference type="CDD" id="cd13595">
    <property type="entry name" value="PBP2_HisGs"/>
    <property type="match status" value="1"/>
</dbReference>
<dbReference type="FunFam" id="3.40.190.10:FF:000008">
    <property type="entry name" value="ATP phosphoribosyltransferase"/>
    <property type="match status" value="1"/>
</dbReference>
<dbReference type="Gene3D" id="3.40.190.10">
    <property type="entry name" value="Periplasmic binding protein-like II"/>
    <property type="match status" value="2"/>
</dbReference>
<dbReference type="HAMAP" id="MF_01018">
    <property type="entry name" value="HisG_Short"/>
    <property type="match status" value="1"/>
</dbReference>
<dbReference type="InterPro" id="IPR013820">
    <property type="entry name" value="ATP_PRibTrfase_cat"/>
</dbReference>
<dbReference type="InterPro" id="IPR018198">
    <property type="entry name" value="ATP_PRibTrfase_CS"/>
</dbReference>
<dbReference type="InterPro" id="IPR001348">
    <property type="entry name" value="ATP_PRibTrfase_HisG"/>
</dbReference>
<dbReference type="InterPro" id="IPR024893">
    <property type="entry name" value="ATP_PRibTrfase_HisG_short"/>
</dbReference>
<dbReference type="NCBIfam" id="TIGR00070">
    <property type="entry name" value="hisG"/>
    <property type="match status" value="1"/>
</dbReference>
<dbReference type="PANTHER" id="PTHR21403:SF8">
    <property type="entry name" value="ATP PHOSPHORIBOSYLTRANSFERASE"/>
    <property type="match status" value="1"/>
</dbReference>
<dbReference type="PANTHER" id="PTHR21403">
    <property type="entry name" value="ATP PHOSPHORIBOSYLTRANSFERASE ATP-PRTASE"/>
    <property type="match status" value="1"/>
</dbReference>
<dbReference type="Pfam" id="PF01634">
    <property type="entry name" value="HisG"/>
    <property type="match status" value="1"/>
</dbReference>
<dbReference type="SUPFAM" id="SSF53850">
    <property type="entry name" value="Periplasmic binding protein-like II"/>
    <property type="match status" value="1"/>
</dbReference>
<dbReference type="PROSITE" id="PS01316">
    <property type="entry name" value="ATP_P_PHORIBOSYLTR"/>
    <property type="match status" value="1"/>
</dbReference>
<comment type="function">
    <text evidence="1">Catalyzes the condensation of ATP and 5-phosphoribose 1-diphosphate to form N'-(5'-phosphoribosyl)-ATP (PR-ATP). Has a crucial role in the pathway because the rate of histidine biosynthesis seems to be controlled primarily by regulation of HisG enzymatic activity.</text>
</comment>
<comment type="catalytic activity">
    <reaction evidence="1">
        <text>1-(5-phospho-beta-D-ribosyl)-ATP + diphosphate = 5-phospho-alpha-D-ribose 1-diphosphate + ATP</text>
        <dbReference type="Rhea" id="RHEA:18473"/>
        <dbReference type="ChEBI" id="CHEBI:30616"/>
        <dbReference type="ChEBI" id="CHEBI:33019"/>
        <dbReference type="ChEBI" id="CHEBI:58017"/>
        <dbReference type="ChEBI" id="CHEBI:73183"/>
        <dbReference type="EC" id="2.4.2.17"/>
    </reaction>
</comment>
<comment type="pathway">
    <text evidence="1">Amino-acid biosynthesis; L-histidine biosynthesis; L-histidine from 5-phospho-alpha-D-ribose 1-diphosphate: step 1/9.</text>
</comment>
<comment type="subunit">
    <text evidence="1">Heteromultimer composed of HisG and HisZ subunits.</text>
</comment>
<comment type="subcellular location">
    <subcellularLocation>
        <location evidence="1">Cytoplasm</location>
    </subcellularLocation>
</comment>
<comment type="domain">
    <text>Lacks the C-terminal regulatory region which is replaced by HisZ.</text>
</comment>
<comment type="similarity">
    <text evidence="1">Belongs to the ATP phosphoribosyltransferase family. Short subfamily.</text>
</comment>
<organism>
    <name type="scientific">Prochlorococcus marinus (strain NATL2A)</name>
    <dbReference type="NCBI Taxonomy" id="59920"/>
    <lineage>
        <taxon>Bacteria</taxon>
        <taxon>Bacillati</taxon>
        <taxon>Cyanobacteriota</taxon>
        <taxon>Cyanophyceae</taxon>
        <taxon>Synechococcales</taxon>
        <taxon>Prochlorococcaceae</taxon>
        <taxon>Prochlorococcus</taxon>
    </lineage>
</organism>
<gene>
    <name evidence="1" type="primary">hisG</name>
    <name type="ordered locus">PMN2A_1890</name>
</gene>
<sequence>MFTVALAKGALLQESVSMFSDVGLDFSAVLDDSNRQLMVPSACGRAKALLVRNSDVPVYVSYGQAQLGIVGFDVLQEQKLQVSNLVDLGFGECHMSVAVKSSSGYLSASDLPPNCRVASKFTNCAKHFFDQIDLPVQLVHLSGSVELGPITGMAEAIVDLVATGRTLRDNGLVEIEELFKSSARLVGHPLSLRLDKGPLQEIIDSIQIQSQTNLLSDGKK</sequence>